<feature type="chain" id="PRO_0000049052" description="Homeobox protein Dlx5a">
    <location>
        <begin position="1"/>
        <end position="283"/>
    </location>
</feature>
<feature type="DNA-binding region" description="Homeobox" evidence="1">
    <location>
        <begin position="137"/>
        <end position="196"/>
    </location>
</feature>
<feature type="region of interest" description="Disordered" evidence="2">
    <location>
        <begin position="15"/>
        <end position="47"/>
    </location>
</feature>
<feature type="region of interest" description="Disordered" evidence="2">
    <location>
        <begin position="198"/>
        <end position="237"/>
    </location>
</feature>
<feature type="compositionally biased region" description="Polar residues" evidence="2">
    <location>
        <begin position="19"/>
        <end position="45"/>
    </location>
</feature>
<feature type="compositionally biased region" description="Polar residues" evidence="2">
    <location>
        <begin position="206"/>
        <end position="220"/>
    </location>
</feature>
<sequence>MTGVFDRRIPSIKPADFQNPFQLSTMHHPSQESPTLPESTATDSGYYSPAGGVHHGYCSPNSGTYGKPLNAYQYQYHGVNGSSGNYSAKSYPDYGSYSTAYHQYAGTYNRVQSQPSPQEKETAEPEVRMVNGKPKKVRKPRTIYSSFQLAALQRRFQNTQYLALPERAELAASLGLTQTQVKIWFQNKRSKLKKIMKNGELPPEHSPSSSDPMACNSPQSPAVWDSQGPQRPHHQPQNINTAASTFLEMRELFVVFLYRGDEFFTLQAPGTLHSLALGSGTLY</sequence>
<keyword id="KW-0217">Developmental protein</keyword>
<keyword id="KW-0238">DNA-binding</keyword>
<keyword id="KW-0371">Homeobox</keyword>
<keyword id="KW-0539">Nucleus</keyword>
<keyword id="KW-1185">Reference proteome</keyword>
<name>DLX5A_DANRE</name>
<comment type="subcellular location">
    <subcellularLocation>
        <location evidence="1">Nucleus</location>
    </subcellularLocation>
</comment>
<comment type="developmental stage">
    <text>Not expressed during gastrulation, and shortly after gastrulation found in the cells of the ventral fore-brain rudiment, presumptive precursor cells of the olfactory placodes, overlapping subsets of cells in the auditory vesicle, cells of the median fin fold, and cells of the visceral arches and their primordia.</text>
</comment>
<comment type="similarity">
    <text evidence="3">Belongs to the distal-less homeobox family.</text>
</comment>
<proteinExistence type="evidence at transcript level"/>
<reference key="1">
    <citation type="journal article" date="1994" name="J. Neurosci.">
        <title>Combinatorial expression of three zebrafish genes related to distal-less: part of a homeobox gene code for the head.</title>
        <authorList>
            <person name="Akimenko M.-A."/>
            <person name="Ekker M."/>
            <person name="Wegner J."/>
            <person name="Lin W."/>
            <person name="Westerfield M."/>
        </authorList>
    </citation>
    <scope>NUCLEOTIDE SEQUENCE [MRNA]</scope>
</reference>
<accession>P50576</accession>
<gene>
    <name type="primary">dlx5a</name>
    <name type="synonym">dlx4</name>
</gene>
<dbReference type="EMBL" id="U03876">
    <property type="protein sequence ID" value="AAA19827.1"/>
    <property type="molecule type" value="mRNA"/>
</dbReference>
<dbReference type="PIR" id="I50112">
    <property type="entry name" value="I50112"/>
</dbReference>
<dbReference type="SMR" id="P50576"/>
<dbReference type="FunCoup" id="P50576">
    <property type="interactions" value="10"/>
</dbReference>
<dbReference type="STRING" id="7955.ENSDARP00000100492"/>
<dbReference type="PaxDb" id="7955-ENSDARP00000100492"/>
<dbReference type="AGR" id="ZFIN:ZDB-GENE-990415-49"/>
<dbReference type="ZFIN" id="ZDB-GENE-990415-49">
    <property type="gene designation" value="dlx5a"/>
</dbReference>
<dbReference type="eggNOG" id="KOG0850">
    <property type="taxonomic scope" value="Eukaryota"/>
</dbReference>
<dbReference type="InParanoid" id="P50576"/>
<dbReference type="PhylomeDB" id="P50576"/>
<dbReference type="PRO" id="PR:P50576"/>
<dbReference type="Proteomes" id="UP000000437">
    <property type="component" value="Unplaced"/>
</dbReference>
<dbReference type="GO" id="GO:0005634">
    <property type="term" value="C:nucleus"/>
    <property type="evidence" value="ECO:0007669"/>
    <property type="project" value="UniProtKB-SubCell"/>
</dbReference>
<dbReference type="GO" id="GO:0000981">
    <property type="term" value="F:DNA-binding transcription factor activity, RNA polymerase II-specific"/>
    <property type="evidence" value="ECO:0000318"/>
    <property type="project" value="GO_Central"/>
</dbReference>
<dbReference type="GO" id="GO:0000978">
    <property type="term" value="F:RNA polymerase II cis-regulatory region sequence-specific DNA binding"/>
    <property type="evidence" value="ECO:0000318"/>
    <property type="project" value="GO_Central"/>
</dbReference>
<dbReference type="GO" id="GO:0051216">
    <property type="term" value="P:cartilage development"/>
    <property type="evidence" value="ECO:0000316"/>
    <property type="project" value="ZFIN"/>
</dbReference>
<dbReference type="GO" id="GO:0030154">
    <property type="term" value="P:cell differentiation"/>
    <property type="evidence" value="ECO:0000318"/>
    <property type="project" value="GO_Central"/>
</dbReference>
<dbReference type="GO" id="GO:0048706">
    <property type="term" value="P:embryonic skeletal system development"/>
    <property type="evidence" value="ECO:0000318"/>
    <property type="project" value="GO_Central"/>
</dbReference>
<dbReference type="GO" id="GO:0048703">
    <property type="term" value="P:embryonic viscerocranium morphogenesis"/>
    <property type="evidence" value="ECO:0000316"/>
    <property type="project" value="ZFIN"/>
</dbReference>
<dbReference type="GO" id="GO:0033334">
    <property type="term" value="P:fin morphogenesis"/>
    <property type="evidence" value="ECO:0000315"/>
    <property type="project" value="ZFIN"/>
</dbReference>
<dbReference type="GO" id="GO:0035141">
    <property type="term" value="P:medial fin morphogenesis"/>
    <property type="evidence" value="ECO:0000316"/>
    <property type="project" value="ZFIN"/>
</dbReference>
<dbReference type="GO" id="GO:0001841">
    <property type="term" value="P:neural tube formation"/>
    <property type="evidence" value="ECO:0000315"/>
    <property type="project" value="ZFIN"/>
</dbReference>
<dbReference type="GO" id="GO:0021628">
    <property type="term" value="P:olfactory nerve formation"/>
    <property type="evidence" value="ECO:0000315"/>
    <property type="project" value="ZFIN"/>
</dbReference>
<dbReference type="GO" id="GO:0071699">
    <property type="term" value="P:olfactory placode morphogenesis"/>
    <property type="evidence" value="ECO:0000315"/>
    <property type="project" value="ZFIN"/>
</dbReference>
<dbReference type="GO" id="GO:0033339">
    <property type="term" value="P:pectoral fin development"/>
    <property type="evidence" value="ECO:0000316"/>
    <property type="project" value="ZFIN"/>
</dbReference>
<dbReference type="GO" id="GO:0006357">
    <property type="term" value="P:regulation of transcription by RNA polymerase II"/>
    <property type="evidence" value="ECO:0000318"/>
    <property type="project" value="GO_Central"/>
</dbReference>
<dbReference type="GO" id="GO:0009612">
    <property type="term" value="P:response to mechanical stimulus"/>
    <property type="evidence" value="ECO:0000314"/>
    <property type="project" value="ZFIN"/>
</dbReference>
<dbReference type="CDD" id="cd00086">
    <property type="entry name" value="homeodomain"/>
    <property type="match status" value="1"/>
</dbReference>
<dbReference type="FunFam" id="1.10.10.60:FF:000048">
    <property type="entry name" value="Distal-less homeobox 2"/>
    <property type="match status" value="1"/>
</dbReference>
<dbReference type="Gene3D" id="1.10.10.60">
    <property type="entry name" value="Homeodomain-like"/>
    <property type="match status" value="1"/>
</dbReference>
<dbReference type="InterPro" id="IPR050460">
    <property type="entry name" value="Distal-less_Homeobox_TF"/>
</dbReference>
<dbReference type="InterPro" id="IPR022135">
    <property type="entry name" value="Distal-less_N"/>
</dbReference>
<dbReference type="InterPro" id="IPR001356">
    <property type="entry name" value="HD"/>
</dbReference>
<dbReference type="InterPro" id="IPR020479">
    <property type="entry name" value="HD_metazoa"/>
</dbReference>
<dbReference type="InterPro" id="IPR017970">
    <property type="entry name" value="Homeobox_CS"/>
</dbReference>
<dbReference type="InterPro" id="IPR009057">
    <property type="entry name" value="Homeodomain-like_sf"/>
</dbReference>
<dbReference type="InterPro" id="IPR000047">
    <property type="entry name" value="HTH_motif"/>
</dbReference>
<dbReference type="PANTHER" id="PTHR24327">
    <property type="entry name" value="HOMEOBOX PROTEIN"/>
    <property type="match status" value="1"/>
</dbReference>
<dbReference type="PANTHER" id="PTHR24327:SF31">
    <property type="entry name" value="HOMEOBOX PROTEIN DLX-5"/>
    <property type="match status" value="1"/>
</dbReference>
<dbReference type="Pfam" id="PF12413">
    <property type="entry name" value="DLL_N"/>
    <property type="match status" value="1"/>
</dbReference>
<dbReference type="Pfam" id="PF00046">
    <property type="entry name" value="Homeodomain"/>
    <property type="match status" value="1"/>
</dbReference>
<dbReference type="PRINTS" id="PR00024">
    <property type="entry name" value="HOMEOBOX"/>
</dbReference>
<dbReference type="PRINTS" id="PR00031">
    <property type="entry name" value="HTHREPRESSR"/>
</dbReference>
<dbReference type="SMART" id="SM00389">
    <property type="entry name" value="HOX"/>
    <property type="match status" value="1"/>
</dbReference>
<dbReference type="SUPFAM" id="SSF46689">
    <property type="entry name" value="Homeodomain-like"/>
    <property type="match status" value="1"/>
</dbReference>
<dbReference type="PROSITE" id="PS00027">
    <property type="entry name" value="HOMEOBOX_1"/>
    <property type="match status" value="1"/>
</dbReference>
<dbReference type="PROSITE" id="PS50071">
    <property type="entry name" value="HOMEOBOX_2"/>
    <property type="match status" value="1"/>
</dbReference>
<organism>
    <name type="scientific">Danio rerio</name>
    <name type="common">Zebrafish</name>
    <name type="synonym">Brachydanio rerio</name>
    <dbReference type="NCBI Taxonomy" id="7955"/>
    <lineage>
        <taxon>Eukaryota</taxon>
        <taxon>Metazoa</taxon>
        <taxon>Chordata</taxon>
        <taxon>Craniata</taxon>
        <taxon>Vertebrata</taxon>
        <taxon>Euteleostomi</taxon>
        <taxon>Actinopterygii</taxon>
        <taxon>Neopterygii</taxon>
        <taxon>Teleostei</taxon>
        <taxon>Ostariophysi</taxon>
        <taxon>Cypriniformes</taxon>
        <taxon>Danionidae</taxon>
        <taxon>Danioninae</taxon>
        <taxon>Danio</taxon>
    </lineage>
</organism>
<evidence type="ECO:0000255" key="1">
    <source>
        <dbReference type="PROSITE-ProRule" id="PRU00108"/>
    </source>
</evidence>
<evidence type="ECO:0000256" key="2">
    <source>
        <dbReference type="SAM" id="MobiDB-lite"/>
    </source>
</evidence>
<evidence type="ECO:0000305" key="3"/>
<protein>
    <recommendedName>
        <fullName>Homeobox protein Dlx5a</fullName>
    </recommendedName>
    <alternativeName>
        <fullName>DLX-4</fullName>
    </alternativeName>
    <alternativeName>
        <fullName>Distal-less homeobox protein 5a</fullName>
    </alternativeName>
</protein>